<sequence length="108" mass="12097">MSQWQNICKIDDILPGTGVCALSGGEQVAIFRPYHSDQVFAISNIDPFFEASVLSRGLIAEHQGELWVASPLKKQRFRLSDGLCMEDEQFSVKHYDARVKDGVVQLRG</sequence>
<accession>P0A230</accession>
<accession>P40789</accession>
<proteinExistence type="inferred from homology"/>
<feature type="chain" id="PRO_0000096856" description="Nitrite reductase (NADH) small subunit">
    <location>
        <begin position="1"/>
        <end position="108"/>
    </location>
</feature>
<dbReference type="EC" id="1.7.1.15"/>
<dbReference type="EMBL" id="AL513382">
    <property type="protein sequence ID" value="CAD08138.1"/>
    <property type="molecule type" value="Genomic_DNA"/>
</dbReference>
<dbReference type="EMBL" id="AE014613">
    <property type="protein sequence ID" value="AAO71499.1"/>
    <property type="molecule type" value="Genomic_DNA"/>
</dbReference>
<dbReference type="RefSeq" id="NP_458427.1">
    <property type="nucleotide sequence ID" value="NC_003198.1"/>
</dbReference>
<dbReference type="RefSeq" id="WP_000084814.1">
    <property type="nucleotide sequence ID" value="NZ_WSUR01000001.1"/>
</dbReference>
<dbReference type="SMR" id="P0A230"/>
<dbReference type="STRING" id="220341.gene:17588151"/>
<dbReference type="KEGG" id="stt:t4030"/>
<dbReference type="KEGG" id="sty:STY4321"/>
<dbReference type="PATRIC" id="fig|220341.7.peg.4416"/>
<dbReference type="eggNOG" id="COG2146">
    <property type="taxonomic scope" value="Bacteria"/>
</dbReference>
<dbReference type="HOGENOM" id="CLU_055690_3_0_6"/>
<dbReference type="OMA" id="IDNRDPF"/>
<dbReference type="Proteomes" id="UP000000541">
    <property type="component" value="Chromosome"/>
</dbReference>
<dbReference type="Proteomes" id="UP000002670">
    <property type="component" value="Chromosome"/>
</dbReference>
<dbReference type="GO" id="GO:0005737">
    <property type="term" value="C:cytoplasm"/>
    <property type="evidence" value="ECO:0007669"/>
    <property type="project" value="UniProtKB-SubCell"/>
</dbReference>
<dbReference type="GO" id="GO:0009344">
    <property type="term" value="C:nitrite reductase complex [NAD(P)H]"/>
    <property type="evidence" value="ECO:0007669"/>
    <property type="project" value="TreeGrafter"/>
</dbReference>
<dbReference type="GO" id="GO:0051537">
    <property type="term" value="F:2 iron, 2 sulfur cluster binding"/>
    <property type="evidence" value="ECO:0007669"/>
    <property type="project" value="InterPro"/>
</dbReference>
<dbReference type="GO" id="GO:0106316">
    <property type="term" value="F:nitrite reductase NADH activity"/>
    <property type="evidence" value="ECO:0007669"/>
    <property type="project" value="UniProtKB-EC"/>
</dbReference>
<dbReference type="GO" id="GO:0042128">
    <property type="term" value="P:nitrate assimilation"/>
    <property type="evidence" value="ECO:0007669"/>
    <property type="project" value="UniProtKB-KW"/>
</dbReference>
<dbReference type="CDD" id="cd03529">
    <property type="entry name" value="Rieske_NirD"/>
    <property type="match status" value="1"/>
</dbReference>
<dbReference type="FunFam" id="2.102.10.10:FF:000002">
    <property type="entry name" value="Nitrite reductase [NAD(P)H] small subunit"/>
    <property type="match status" value="1"/>
</dbReference>
<dbReference type="Gene3D" id="2.102.10.10">
    <property type="entry name" value="Rieske [2Fe-2S] iron-sulphur domain"/>
    <property type="match status" value="1"/>
</dbReference>
<dbReference type="InterPro" id="IPR017881">
    <property type="entry name" value="NirD"/>
</dbReference>
<dbReference type="InterPro" id="IPR012748">
    <property type="entry name" value="Rieske-like_NirD"/>
</dbReference>
<dbReference type="InterPro" id="IPR036922">
    <property type="entry name" value="Rieske_2Fe-2S_sf"/>
</dbReference>
<dbReference type="NCBIfam" id="TIGR02378">
    <property type="entry name" value="nirD_assim_sml"/>
    <property type="match status" value="1"/>
</dbReference>
<dbReference type="NCBIfam" id="NF007066">
    <property type="entry name" value="PRK09511.1"/>
    <property type="match status" value="1"/>
</dbReference>
<dbReference type="PANTHER" id="PTHR40562">
    <property type="match status" value="1"/>
</dbReference>
<dbReference type="PANTHER" id="PTHR40562:SF1">
    <property type="entry name" value="NITRITE REDUCTASE (NADH) SMALL SUBUNIT"/>
    <property type="match status" value="1"/>
</dbReference>
<dbReference type="Pfam" id="PF13806">
    <property type="entry name" value="Rieske_2"/>
    <property type="match status" value="1"/>
</dbReference>
<dbReference type="SUPFAM" id="SSF50022">
    <property type="entry name" value="ISP domain"/>
    <property type="match status" value="1"/>
</dbReference>
<dbReference type="PROSITE" id="PS51300">
    <property type="entry name" value="NIRD"/>
    <property type="match status" value="1"/>
</dbReference>
<organism>
    <name type="scientific">Salmonella typhi</name>
    <dbReference type="NCBI Taxonomy" id="90370"/>
    <lineage>
        <taxon>Bacteria</taxon>
        <taxon>Pseudomonadati</taxon>
        <taxon>Pseudomonadota</taxon>
        <taxon>Gammaproteobacteria</taxon>
        <taxon>Enterobacterales</taxon>
        <taxon>Enterobacteriaceae</taxon>
        <taxon>Salmonella</taxon>
    </lineage>
</organism>
<name>NIRD_SALTI</name>
<keyword id="KW-0963">Cytoplasm</keyword>
<keyword id="KW-0520">NAD</keyword>
<keyword id="KW-0534">Nitrate assimilation</keyword>
<keyword id="KW-0560">Oxidoreductase</keyword>
<gene>
    <name type="primary">nirD</name>
    <name type="ordered locus">STY4321</name>
    <name type="ordered locus">t4030</name>
</gene>
<protein>
    <recommendedName>
        <fullName>Nitrite reductase (NADH) small subunit</fullName>
        <ecNumber>1.7.1.15</ecNumber>
    </recommendedName>
</protein>
<comment type="function">
    <text evidence="1">Required for activity of the reductase.</text>
</comment>
<comment type="catalytic activity">
    <reaction>
        <text>NH4(+) + 3 NAD(+) + 2 H2O = nitrite + 3 NADH + 5 H(+)</text>
        <dbReference type="Rhea" id="RHEA:24628"/>
        <dbReference type="ChEBI" id="CHEBI:15377"/>
        <dbReference type="ChEBI" id="CHEBI:15378"/>
        <dbReference type="ChEBI" id="CHEBI:16301"/>
        <dbReference type="ChEBI" id="CHEBI:28938"/>
        <dbReference type="ChEBI" id="CHEBI:57540"/>
        <dbReference type="ChEBI" id="CHEBI:57945"/>
        <dbReference type="EC" id="1.7.1.15"/>
    </reaction>
</comment>
<comment type="subunit">
    <text evidence="1">Associates with NirB.</text>
</comment>
<comment type="subcellular location">
    <subcellularLocation>
        <location evidence="1">Cytoplasm</location>
    </subcellularLocation>
</comment>
<reference key="1">
    <citation type="journal article" date="2001" name="Nature">
        <title>Complete genome sequence of a multiple drug resistant Salmonella enterica serovar Typhi CT18.</title>
        <authorList>
            <person name="Parkhill J."/>
            <person name="Dougan G."/>
            <person name="James K.D."/>
            <person name="Thomson N.R."/>
            <person name="Pickard D."/>
            <person name="Wain J."/>
            <person name="Churcher C.M."/>
            <person name="Mungall K.L."/>
            <person name="Bentley S.D."/>
            <person name="Holden M.T.G."/>
            <person name="Sebaihia M."/>
            <person name="Baker S."/>
            <person name="Basham D."/>
            <person name="Brooks K."/>
            <person name="Chillingworth T."/>
            <person name="Connerton P."/>
            <person name="Cronin A."/>
            <person name="Davis P."/>
            <person name="Davies R.M."/>
            <person name="Dowd L."/>
            <person name="White N."/>
            <person name="Farrar J."/>
            <person name="Feltwell T."/>
            <person name="Hamlin N."/>
            <person name="Haque A."/>
            <person name="Hien T.T."/>
            <person name="Holroyd S."/>
            <person name="Jagels K."/>
            <person name="Krogh A."/>
            <person name="Larsen T.S."/>
            <person name="Leather S."/>
            <person name="Moule S."/>
            <person name="O'Gaora P."/>
            <person name="Parry C."/>
            <person name="Quail M.A."/>
            <person name="Rutherford K.M."/>
            <person name="Simmonds M."/>
            <person name="Skelton J."/>
            <person name="Stevens K."/>
            <person name="Whitehead S."/>
            <person name="Barrell B.G."/>
        </authorList>
    </citation>
    <scope>NUCLEOTIDE SEQUENCE [LARGE SCALE GENOMIC DNA]</scope>
    <source>
        <strain>CT18</strain>
    </source>
</reference>
<reference key="2">
    <citation type="journal article" date="2003" name="J. Bacteriol.">
        <title>Comparative genomics of Salmonella enterica serovar Typhi strains Ty2 and CT18.</title>
        <authorList>
            <person name="Deng W."/>
            <person name="Liou S.-R."/>
            <person name="Plunkett G. III"/>
            <person name="Mayhew G.F."/>
            <person name="Rose D.J."/>
            <person name="Burland V."/>
            <person name="Kodoyianni V."/>
            <person name="Schwartz D.C."/>
            <person name="Blattner F.R."/>
        </authorList>
    </citation>
    <scope>NUCLEOTIDE SEQUENCE [LARGE SCALE GENOMIC DNA]</scope>
    <source>
        <strain>ATCC 700931 / Ty2</strain>
    </source>
</reference>
<evidence type="ECO:0000250" key="1"/>